<gene>
    <name evidence="1" type="primary">gpmI</name>
    <name type="ordered locus">AM802</name>
</gene>
<protein>
    <recommendedName>
        <fullName evidence="1">2,3-bisphosphoglycerate-independent phosphoglycerate mutase</fullName>
        <shortName evidence="1">BPG-independent PGAM</shortName>
        <shortName evidence="1">Phosphoglyceromutase</shortName>
        <shortName evidence="1">iPGM</shortName>
        <ecNumber evidence="1">5.4.2.12</ecNumber>
    </recommendedName>
</protein>
<keyword id="KW-0324">Glycolysis</keyword>
<keyword id="KW-0413">Isomerase</keyword>
<keyword id="KW-0464">Manganese</keyword>
<keyword id="KW-0479">Metal-binding</keyword>
<evidence type="ECO:0000255" key="1">
    <source>
        <dbReference type="HAMAP-Rule" id="MF_01038"/>
    </source>
</evidence>
<evidence type="ECO:0000305" key="2"/>
<comment type="function">
    <text evidence="1">Catalyzes the interconversion of 2-phosphoglycerate and 3-phosphoglycerate.</text>
</comment>
<comment type="catalytic activity">
    <reaction evidence="1">
        <text>(2R)-2-phosphoglycerate = (2R)-3-phosphoglycerate</text>
        <dbReference type="Rhea" id="RHEA:15901"/>
        <dbReference type="ChEBI" id="CHEBI:58272"/>
        <dbReference type="ChEBI" id="CHEBI:58289"/>
        <dbReference type="EC" id="5.4.2.12"/>
    </reaction>
</comment>
<comment type="cofactor">
    <cofactor evidence="1">
        <name>Mn(2+)</name>
        <dbReference type="ChEBI" id="CHEBI:29035"/>
    </cofactor>
    <text evidence="1">Binds 2 manganese ions per subunit.</text>
</comment>
<comment type="pathway">
    <text evidence="1">Carbohydrate degradation; glycolysis; pyruvate from D-glyceraldehyde 3-phosphate: step 3/5.</text>
</comment>
<comment type="subunit">
    <text evidence="1">Monomer.</text>
</comment>
<comment type="similarity">
    <text evidence="1">Belongs to the BPG-independent phosphoglycerate mutase family.</text>
</comment>
<comment type="sequence caution" evidence="2">
    <conflict type="erroneous initiation">
        <sequence resource="EMBL-CDS" id="AAV86731"/>
    </conflict>
    <text>Extended N-terminus.</text>
</comment>
<name>GPMI_ANAMM</name>
<proteinExistence type="inferred from homology"/>
<organism>
    <name type="scientific">Anaplasma marginale (strain St. Maries)</name>
    <dbReference type="NCBI Taxonomy" id="234826"/>
    <lineage>
        <taxon>Bacteria</taxon>
        <taxon>Pseudomonadati</taxon>
        <taxon>Pseudomonadota</taxon>
        <taxon>Alphaproteobacteria</taxon>
        <taxon>Rickettsiales</taxon>
        <taxon>Anaplasmataceae</taxon>
        <taxon>Anaplasma</taxon>
    </lineage>
</organism>
<dbReference type="EC" id="5.4.2.12" evidence="1"/>
<dbReference type="EMBL" id="CP000030">
    <property type="protein sequence ID" value="AAV86731.1"/>
    <property type="status" value="ALT_INIT"/>
    <property type="molecule type" value="Genomic_DNA"/>
</dbReference>
<dbReference type="RefSeq" id="WP_010264978.1">
    <property type="nucleotide sequence ID" value="NZ_AFMU01000051.1"/>
</dbReference>
<dbReference type="SMR" id="Q5PAE9"/>
<dbReference type="KEGG" id="ama:AM802"/>
<dbReference type="HOGENOM" id="CLU_026099_2_0_5"/>
<dbReference type="UniPathway" id="UPA00109">
    <property type="reaction ID" value="UER00186"/>
</dbReference>
<dbReference type="GO" id="GO:0005829">
    <property type="term" value="C:cytosol"/>
    <property type="evidence" value="ECO:0007669"/>
    <property type="project" value="TreeGrafter"/>
</dbReference>
<dbReference type="GO" id="GO:0030145">
    <property type="term" value="F:manganese ion binding"/>
    <property type="evidence" value="ECO:0007669"/>
    <property type="project" value="UniProtKB-UniRule"/>
</dbReference>
<dbReference type="GO" id="GO:0004619">
    <property type="term" value="F:phosphoglycerate mutase activity"/>
    <property type="evidence" value="ECO:0007669"/>
    <property type="project" value="UniProtKB-EC"/>
</dbReference>
<dbReference type="GO" id="GO:0006007">
    <property type="term" value="P:glucose catabolic process"/>
    <property type="evidence" value="ECO:0007669"/>
    <property type="project" value="InterPro"/>
</dbReference>
<dbReference type="GO" id="GO:0006096">
    <property type="term" value="P:glycolytic process"/>
    <property type="evidence" value="ECO:0007669"/>
    <property type="project" value="UniProtKB-UniRule"/>
</dbReference>
<dbReference type="CDD" id="cd16010">
    <property type="entry name" value="iPGM"/>
    <property type="match status" value="1"/>
</dbReference>
<dbReference type="Gene3D" id="3.40.720.10">
    <property type="entry name" value="Alkaline Phosphatase, subunit A"/>
    <property type="match status" value="1"/>
</dbReference>
<dbReference type="Gene3D" id="3.40.1450.10">
    <property type="entry name" value="BPG-independent phosphoglycerate mutase, domain B"/>
    <property type="match status" value="1"/>
</dbReference>
<dbReference type="HAMAP" id="MF_01038">
    <property type="entry name" value="GpmI"/>
    <property type="match status" value="1"/>
</dbReference>
<dbReference type="InterPro" id="IPR017850">
    <property type="entry name" value="Alkaline_phosphatase_core_sf"/>
</dbReference>
<dbReference type="InterPro" id="IPR011258">
    <property type="entry name" value="BPG-indep_PGM_N"/>
</dbReference>
<dbReference type="InterPro" id="IPR006124">
    <property type="entry name" value="Metalloenzyme"/>
</dbReference>
<dbReference type="InterPro" id="IPR036646">
    <property type="entry name" value="PGAM_B_sf"/>
</dbReference>
<dbReference type="InterPro" id="IPR005995">
    <property type="entry name" value="Pgm_bpd_ind"/>
</dbReference>
<dbReference type="NCBIfam" id="TIGR01307">
    <property type="entry name" value="pgm_bpd_ind"/>
    <property type="match status" value="1"/>
</dbReference>
<dbReference type="PANTHER" id="PTHR31637">
    <property type="entry name" value="2,3-BISPHOSPHOGLYCERATE-INDEPENDENT PHOSPHOGLYCERATE MUTASE"/>
    <property type="match status" value="1"/>
</dbReference>
<dbReference type="PANTHER" id="PTHR31637:SF0">
    <property type="entry name" value="2,3-BISPHOSPHOGLYCERATE-INDEPENDENT PHOSPHOGLYCERATE MUTASE"/>
    <property type="match status" value="1"/>
</dbReference>
<dbReference type="Pfam" id="PF06415">
    <property type="entry name" value="iPGM_N"/>
    <property type="match status" value="1"/>
</dbReference>
<dbReference type="Pfam" id="PF01676">
    <property type="entry name" value="Metalloenzyme"/>
    <property type="match status" value="1"/>
</dbReference>
<dbReference type="PIRSF" id="PIRSF001492">
    <property type="entry name" value="IPGAM"/>
    <property type="match status" value="1"/>
</dbReference>
<dbReference type="SUPFAM" id="SSF64158">
    <property type="entry name" value="2,3-Bisphosphoglycerate-independent phosphoglycerate mutase, substrate-binding domain"/>
    <property type="match status" value="1"/>
</dbReference>
<dbReference type="SUPFAM" id="SSF53649">
    <property type="entry name" value="Alkaline phosphatase-like"/>
    <property type="match status" value="1"/>
</dbReference>
<accession>Q5PAE9</accession>
<feature type="chain" id="PRO_0000212118" description="2,3-bisphosphoglycerate-independent phosphoglycerate mutase">
    <location>
        <begin position="1"/>
        <end position="494"/>
    </location>
</feature>
<feature type="active site" description="Phosphoserine intermediate" evidence="1">
    <location>
        <position position="62"/>
    </location>
</feature>
<feature type="binding site" evidence="1">
    <location>
        <position position="12"/>
    </location>
    <ligand>
        <name>Mn(2+)</name>
        <dbReference type="ChEBI" id="CHEBI:29035"/>
        <label>2</label>
    </ligand>
</feature>
<feature type="binding site" evidence="1">
    <location>
        <position position="62"/>
    </location>
    <ligand>
        <name>Mn(2+)</name>
        <dbReference type="ChEBI" id="CHEBI:29035"/>
        <label>2</label>
    </ligand>
</feature>
<feature type="binding site" evidence="1">
    <location>
        <position position="121"/>
    </location>
    <ligand>
        <name>substrate</name>
    </ligand>
</feature>
<feature type="binding site" evidence="1">
    <location>
        <begin position="150"/>
        <end position="151"/>
    </location>
    <ligand>
        <name>substrate</name>
    </ligand>
</feature>
<feature type="binding site" evidence="1">
    <location>
        <position position="181"/>
    </location>
    <ligand>
        <name>substrate</name>
    </ligand>
</feature>
<feature type="binding site" evidence="1">
    <location>
        <position position="187"/>
    </location>
    <ligand>
        <name>substrate</name>
    </ligand>
</feature>
<feature type="binding site" evidence="1">
    <location>
        <begin position="252"/>
        <end position="255"/>
    </location>
    <ligand>
        <name>substrate</name>
    </ligand>
</feature>
<feature type="binding site" evidence="1">
    <location>
        <position position="317"/>
    </location>
    <ligand>
        <name>substrate</name>
    </ligand>
</feature>
<feature type="binding site" evidence="1">
    <location>
        <position position="384"/>
    </location>
    <ligand>
        <name>Mn(2+)</name>
        <dbReference type="ChEBI" id="CHEBI:29035"/>
        <label>1</label>
    </ligand>
</feature>
<feature type="binding site" evidence="1">
    <location>
        <position position="388"/>
    </location>
    <ligand>
        <name>Mn(2+)</name>
        <dbReference type="ChEBI" id="CHEBI:29035"/>
        <label>1</label>
    </ligand>
</feature>
<feature type="binding site" evidence="1">
    <location>
        <position position="425"/>
    </location>
    <ligand>
        <name>Mn(2+)</name>
        <dbReference type="ChEBI" id="CHEBI:29035"/>
        <label>2</label>
    </ligand>
</feature>
<feature type="binding site" evidence="1">
    <location>
        <position position="426"/>
    </location>
    <ligand>
        <name>Mn(2+)</name>
        <dbReference type="ChEBI" id="CHEBI:29035"/>
        <label>2</label>
    </ligand>
</feature>
<feature type="binding site" evidence="1">
    <location>
        <position position="443"/>
    </location>
    <ligand>
        <name>Mn(2+)</name>
        <dbReference type="ChEBI" id="CHEBI:29035"/>
        <label>1</label>
    </ligand>
</feature>
<sequence length="494" mass="53864">MSGSAVVLCILDGWGNGNGDECDAIHAARKPFWESVVSGCPRSSLSASGEDVGLPAAQVGNSEVGHISLGAGRVVLQDLQRINAEIGEIHSNPYLLQFAEAIKNGRGVCHIMGLLSDGGVHGLQDHITQLARVLAELRIKVLIHAFLDGRDVSPRSAKKHVTALNDAVHSYDISIATISGRYYAMDRDHRLDRTEKAYEAIALARGPRYRDAMTAIESSYSEGISDEFLVPSVIGDYQGFSPKDGILLTNFRSDRIVQILSMILHRSQEVSNILGMVRYSEKIQVPSLFPPRNICNTLGEVVSKCGLKQLRIAETEKYAHVTFFFSGGKEEPFPGEDRVIIPSPQVSTYDLQPEMSAFPMTEVLVERIESRQYSLIVVNYANADMVGHTGNLEAVKKAISVIDACLQMVFNAAKKAGATMLITADHGNAEKMFDMRGTPFTAHTSNTVPLVLCNCDKRFGLVDGRLCDVAPTILELMEIAKPDEMTGSSLLTPE</sequence>
<reference key="1">
    <citation type="journal article" date="2005" name="Proc. Natl. Acad. Sci. U.S.A.">
        <title>Complete genome sequencing of Anaplasma marginale reveals that the surface is skewed to two superfamilies of outer membrane proteins.</title>
        <authorList>
            <person name="Brayton K.A."/>
            <person name="Kappmeyer L.S."/>
            <person name="Herndon D.R."/>
            <person name="Dark M.J."/>
            <person name="Tibbals D.L."/>
            <person name="Palmer G.H."/>
            <person name="McGuire T.C."/>
            <person name="Knowles D.P. Jr."/>
        </authorList>
    </citation>
    <scope>NUCLEOTIDE SEQUENCE [LARGE SCALE GENOMIC DNA]</scope>
    <source>
        <strain>St. Maries</strain>
    </source>
</reference>